<keyword id="KW-0227">DNA damage</keyword>
<keyword id="KW-0234">DNA repair</keyword>
<keyword id="KW-0378">Hydrolase</keyword>
<keyword id="KW-1185">Reference proteome</keyword>
<proteinExistence type="inferred from homology"/>
<gene>
    <name type="primary">mag</name>
    <name type="ordered locus">Cgl0116</name>
    <name type="ordered locus">cg0151</name>
</gene>
<organism>
    <name type="scientific">Corynebacterium glutamicum (strain ATCC 13032 / DSM 20300 / JCM 1318 / BCRC 11384 / CCUG 27702 / LMG 3730 / NBRC 12168 / NCIMB 10025 / NRRL B-2784 / 534)</name>
    <dbReference type="NCBI Taxonomy" id="196627"/>
    <lineage>
        <taxon>Bacteria</taxon>
        <taxon>Bacillati</taxon>
        <taxon>Actinomycetota</taxon>
        <taxon>Actinomycetes</taxon>
        <taxon>Mycobacteriales</taxon>
        <taxon>Corynebacteriaceae</taxon>
        <taxon>Corynebacterium</taxon>
    </lineage>
</organism>
<feature type="chain" id="PRO_0000100083" description="Putative 3-methyladenine DNA glycosylase">
    <location>
        <begin position="1"/>
        <end position="189"/>
    </location>
</feature>
<comment type="similarity">
    <text evidence="1">Belongs to the DNA glycosylase MPG family.</text>
</comment>
<comment type="sequence caution" evidence="2">
    <conflict type="erroneous initiation">
        <sequence resource="EMBL-CDS" id="BAB97509"/>
    </conflict>
</comment>
<sequence length="189" mass="20162">MPIDFLQPADIVAPQLLGCTLTHGGVGIRITEVEAYLDSTDEAAHTYRGKTPRNAAMFGPGGHMYVYISYGIHRAGNIVCGPEGTGQGVLLRAGEVVSGESIAQSRRGEGIPHARLAQGPGNFGQALGLEISDNHASVFGPSFLISDRVETPEIVRGPRIGISKNTEALLRFWIPNDPTVSGRRGYPKE</sequence>
<name>3MGH_CORGL</name>
<accession>Q8NU33</accession>
<dbReference type="EC" id="3.2.2.-" evidence="1"/>
<dbReference type="EMBL" id="BA000036">
    <property type="protein sequence ID" value="BAB97509.1"/>
    <property type="status" value="ALT_INIT"/>
    <property type="molecule type" value="Genomic_DNA"/>
</dbReference>
<dbReference type="EMBL" id="BX927148">
    <property type="protein sequence ID" value="CAF18684.1"/>
    <property type="molecule type" value="Genomic_DNA"/>
</dbReference>
<dbReference type="RefSeq" id="NP_694632.1">
    <property type="nucleotide sequence ID" value="NC_003450.3"/>
</dbReference>
<dbReference type="RefSeq" id="WP_011265466.1">
    <property type="nucleotide sequence ID" value="NC_006958.1"/>
</dbReference>
<dbReference type="SMR" id="Q8NU33"/>
<dbReference type="STRING" id="196627.cg0151"/>
<dbReference type="KEGG" id="cgb:cg0151"/>
<dbReference type="KEGG" id="cgl:Cgl0116"/>
<dbReference type="PATRIC" id="fig|196627.13.peg.119"/>
<dbReference type="eggNOG" id="COG2094">
    <property type="taxonomic scope" value="Bacteria"/>
</dbReference>
<dbReference type="HOGENOM" id="CLU_060471_3_1_11"/>
<dbReference type="OrthoDB" id="9794313at2"/>
<dbReference type="BioCyc" id="CORYNE:G18NG-9665-MONOMER"/>
<dbReference type="Proteomes" id="UP000000582">
    <property type="component" value="Chromosome"/>
</dbReference>
<dbReference type="Proteomes" id="UP000001009">
    <property type="component" value="Chromosome"/>
</dbReference>
<dbReference type="GO" id="GO:0003905">
    <property type="term" value="F:alkylbase DNA N-glycosylase activity"/>
    <property type="evidence" value="ECO:0007669"/>
    <property type="project" value="InterPro"/>
</dbReference>
<dbReference type="GO" id="GO:0003677">
    <property type="term" value="F:DNA binding"/>
    <property type="evidence" value="ECO:0007669"/>
    <property type="project" value="InterPro"/>
</dbReference>
<dbReference type="GO" id="GO:0006284">
    <property type="term" value="P:base-excision repair"/>
    <property type="evidence" value="ECO:0007669"/>
    <property type="project" value="InterPro"/>
</dbReference>
<dbReference type="CDD" id="cd00540">
    <property type="entry name" value="AAG"/>
    <property type="match status" value="1"/>
</dbReference>
<dbReference type="Gene3D" id="3.10.300.10">
    <property type="entry name" value="Methylpurine-DNA glycosylase (MPG)"/>
    <property type="match status" value="1"/>
</dbReference>
<dbReference type="HAMAP" id="MF_00527">
    <property type="entry name" value="3MGH"/>
    <property type="match status" value="1"/>
</dbReference>
<dbReference type="InterPro" id="IPR011034">
    <property type="entry name" value="Formyl_transferase-like_C_sf"/>
</dbReference>
<dbReference type="InterPro" id="IPR003180">
    <property type="entry name" value="MPG"/>
</dbReference>
<dbReference type="InterPro" id="IPR036995">
    <property type="entry name" value="MPG_sf"/>
</dbReference>
<dbReference type="NCBIfam" id="TIGR00567">
    <property type="entry name" value="3mg"/>
    <property type="match status" value="1"/>
</dbReference>
<dbReference type="NCBIfam" id="NF002003">
    <property type="entry name" value="PRK00802.1-3"/>
    <property type="match status" value="1"/>
</dbReference>
<dbReference type="PANTHER" id="PTHR10429">
    <property type="entry name" value="DNA-3-METHYLADENINE GLYCOSYLASE"/>
    <property type="match status" value="1"/>
</dbReference>
<dbReference type="PANTHER" id="PTHR10429:SF0">
    <property type="entry name" value="DNA-3-METHYLADENINE GLYCOSYLASE"/>
    <property type="match status" value="1"/>
</dbReference>
<dbReference type="Pfam" id="PF02245">
    <property type="entry name" value="Pur_DNA_glyco"/>
    <property type="match status" value="1"/>
</dbReference>
<dbReference type="SUPFAM" id="SSF50486">
    <property type="entry name" value="FMT C-terminal domain-like"/>
    <property type="match status" value="1"/>
</dbReference>
<protein>
    <recommendedName>
        <fullName evidence="1">Putative 3-methyladenine DNA glycosylase</fullName>
        <ecNumber evidence="1">3.2.2.-</ecNumber>
    </recommendedName>
</protein>
<reference key="1">
    <citation type="journal article" date="2003" name="Appl. Microbiol. Biotechnol.">
        <title>The Corynebacterium glutamicum genome: features and impacts on biotechnological processes.</title>
        <authorList>
            <person name="Ikeda M."/>
            <person name="Nakagawa S."/>
        </authorList>
    </citation>
    <scope>NUCLEOTIDE SEQUENCE [LARGE SCALE GENOMIC DNA]</scope>
    <source>
        <strain>ATCC 13032 / DSM 20300 / JCM 1318 / BCRC 11384 / CCUG 27702 / LMG 3730 / NBRC 12168 / NCIMB 10025 / NRRL B-2784 / 534</strain>
    </source>
</reference>
<reference key="2">
    <citation type="journal article" date="2003" name="J. Biotechnol.">
        <title>The complete Corynebacterium glutamicum ATCC 13032 genome sequence and its impact on the production of L-aspartate-derived amino acids and vitamins.</title>
        <authorList>
            <person name="Kalinowski J."/>
            <person name="Bathe B."/>
            <person name="Bartels D."/>
            <person name="Bischoff N."/>
            <person name="Bott M."/>
            <person name="Burkovski A."/>
            <person name="Dusch N."/>
            <person name="Eggeling L."/>
            <person name="Eikmanns B.J."/>
            <person name="Gaigalat L."/>
            <person name="Goesmann A."/>
            <person name="Hartmann M."/>
            <person name="Huthmacher K."/>
            <person name="Kraemer R."/>
            <person name="Linke B."/>
            <person name="McHardy A.C."/>
            <person name="Meyer F."/>
            <person name="Moeckel B."/>
            <person name="Pfefferle W."/>
            <person name="Puehler A."/>
            <person name="Rey D.A."/>
            <person name="Rueckert C."/>
            <person name="Rupp O."/>
            <person name="Sahm H."/>
            <person name="Wendisch V.F."/>
            <person name="Wiegraebe I."/>
            <person name="Tauch A."/>
        </authorList>
    </citation>
    <scope>NUCLEOTIDE SEQUENCE [LARGE SCALE GENOMIC DNA]</scope>
    <source>
        <strain>ATCC 13032 / DSM 20300 / JCM 1318 / BCRC 11384 / CCUG 27702 / LMG 3730 / NBRC 12168 / NCIMB 10025 / NRRL B-2784 / 534</strain>
    </source>
</reference>
<evidence type="ECO:0000255" key="1">
    <source>
        <dbReference type="HAMAP-Rule" id="MF_00527"/>
    </source>
</evidence>
<evidence type="ECO:0000305" key="2"/>